<name>COSA_DICDI</name>
<proteinExistence type="evidence at transcript level"/>
<dbReference type="EMBL" id="AAFI02000008">
    <property type="protein sequence ID" value="EAL71068.1"/>
    <property type="molecule type" value="Genomic_DNA"/>
</dbReference>
<dbReference type="EMBL" id="AU268927">
    <property type="status" value="NOT_ANNOTATED_CDS"/>
    <property type="molecule type" value="mRNA"/>
</dbReference>
<dbReference type="RefSeq" id="XP_644929.1">
    <property type="nucleotide sequence ID" value="XM_639837.1"/>
</dbReference>
<dbReference type="SMR" id="Q558Y7"/>
<dbReference type="PaxDb" id="44689-DDB0202716"/>
<dbReference type="EnsemblProtists" id="EAL71068">
    <property type="protein sequence ID" value="EAL71068"/>
    <property type="gene ID" value="DDB_G0272861"/>
</dbReference>
<dbReference type="GeneID" id="8618608"/>
<dbReference type="KEGG" id="ddi:DDB_G0272861"/>
<dbReference type="dictyBase" id="DDB_G0272861">
    <property type="gene designation" value="cosA"/>
</dbReference>
<dbReference type="VEuPathDB" id="AmoebaDB:DDB_G0272861"/>
<dbReference type="eggNOG" id="KOG3376">
    <property type="taxonomic scope" value="Eukaryota"/>
</dbReference>
<dbReference type="HOGENOM" id="CLU_173478_0_0_1"/>
<dbReference type="InParanoid" id="Q558Y7"/>
<dbReference type="OMA" id="QRVHDNV"/>
<dbReference type="PhylomeDB" id="Q558Y7"/>
<dbReference type="PRO" id="PR:Q558Y7"/>
<dbReference type="Proteomes" id="UP000002195">
    <property type="component" value="Chromosome 2"/>
</dbReference>
<dbReference type="GO" id="GO:0031143">
    <property type="term" value="C:pseudopodium"/>
    <property type="evidence" value="ECO:0000314"/>
    <property type="project" value="dictyBase"/>
</dbReference>
<dbReference type="GO" id="GO:0032970">
    <property type="term" value="P:regulation of actin filament-based process"/>
    <property type="evidence" value="ECO:0000314"/>
    <property type="project" value="UniProtKB"/>
</dbReference>
<dbReference type="GO" id="GO:2000145">
    <property type="term" value="P:regulation of cell motility"/>
    <property type="evidence" value="ECO:0000314"/>
    <property type="project" value="UniProtKB"/>
</dbReference>
<dbReference type="GO" id="GO:0031288">
    <property type="term" value="P:sorocarp morphogenesis"/>
    <property type="evidence" value="ECO:0000315"/>
    <property type="project" value="dictyBase"/>
</dbReference>
<dbReference type="FunFam" id="1.10.10.1540:FF:000002">
    <property type="entry name" value="costars family protein ABRACL"/>
    <property type="match status" value="1"/>
</dbReference>
<dbReference type="Gene3D" id="1.10.10.1540">
    <property type="entry name" value="Costar domain"/>
    <property type="match status" value="1"/>
</dbReference>
<dbReference type="InterPro" id="IPR044302">
    <property type="entry name" value="Costars"/>
</dbReference>
<dbReference type="InterPro" id="IPR027817">
    <property type="entry name" value="Costars_dom"/>
</dbReference>
<dbReference type="InterPro" id="IPR038095">
    <property type="entry name" value="Costars_sf"/>
</dbReference>
<dbReference type="PANTHER" id="PTHR46334">
    <property type="entry name" value="COSTARS FAMILY PROTEIN ABRACL"/>
    <property type="match status" value="1"/>
</dbReference>
<dbReference type="PANTHER" id="PTHR46334:SF1">
    <property type="entry name" value="COSTARS FAMILY PROTEIN ABRACL"/>
    <property type="match status" value="1"/>
</dbReference>
<dbReference type="Pfam" id="PF14705">
    <property type="entry name" value="Costars"/>
    <property type="match status" value="1"/>
</dbReference>
<dbReference type="SMART" id="SM01283">
    <property type="entry name" value="Costars"/>
    <property type="match status" value="1"/>
</dbReference>
<protein>
    <recommendedName>
        <fullName>Protein costars</fullName>
    </recommendedName>
</protein>
<evidence type="ECO:0000269" key="1">
    <source>
    </source>
</evidence>
<evidence type="ECO:0000305" key="2"/>
<reference key="1">
    <citation type="journal article" date="2002" name="Nature">
        <title>Sequence and analysis of chromosome 2 of Dictyostelium discoideum.</title>
        <authorList>
            <person name="Gloeckner G."/>
            <person name="Eichinger L."/>
            <person name="Szafranski K."/>
            <person name="Pachebat J.A."/>
            <person name="Bankier A.T."/>
            <person name="Dear P.H."/>
            <person name="Lehmann R."/>
            <person name="Baumgart C."/>
            <person name="Parra G."/>
            <person name="Abril J.F."/>
            <person name="Guigo R."/>
            <person name="Kumpf K."/>
            <person name="Tunggal B."/>
            <person name="Cox E.C."/>
            <person name="Quail M.A."/>
            <person name="Platzer M."/>
            <person name="Rosenthal A."/>
            <person name="Noegel A.A."/>
        </authorList>
    </citation>
    <scope>NUCLEOTIDE SEQUENCE [LARGE SCALE GENOMIC DNA]</scope>
    <source>
        <strain>AX4</strain>
    </source>
</reference>
<reference key="2">
    <citation type="journal article" date="2005" name="Nature">
        <title>The genome of the social amoeba Dictyostelium discoideum.</title>
        <authorList>
            <person name="Eichinger L."/>
            <person name="Pachebat J.A."/>
            <person name="Gloeckner G."/>
            <person name="Rajandream M.A."/>
            <person name="Sucgang R."/>
            <person name="Berriman M."/>
            <person name="Song J."/>
            <person name="Olsen R."/>
            <person name="Szafranski K."/>
            <person name="Xu Q."/>
            <person name="Tunggal B."/>
            <person name="Kummerfeld S."/>
            <person name="Madera M."/>
            <person name="Konfortov B.A."/>
            <person name="Rivero F."/>
            <person name="Bankier A.T."/>
            <person name="Lehmann R."/>
            <person name="Hamlin N."/>
            <person name="Davies R."/>
            <person name="Gaudet P."/>
            <person name="Fey P."/>
            <person name="Pilcher K."/>
            <person name="Chen G."/>
            <person name="Saunders D."/>
            <person name="Sodergren E.J."/>
            <person name="Davis P."/>
            <person name="Kerhornou A."/>
            <person name="Nie X."/>
            <person name="Hall N."/>
            <person name="Anjard C."/>
            <person name="Hemphill L."/>
            <person name="Bason N."/>
            <person name="Farbrother P."/>
            <person name="Desany B."/>
            <person name="Just E."/>
            <person name="Morio T."/>
            <person name="Rost R."/>
            <person name="Churcher C.M."/>
            <person name="Cooper J."/>
            <person name="Haydock S."/>
            <person name="van Driessche N."/>
            <person name="Cronin A."/>
            <person name="Goodhead I."/>
            <person name="Muzny D.M."/>
            <person name="Mourier T."/>
            <person name="Pain A."/>
            <person name="Lu M."/>
            <person name="Harper D."/>
            <person name="Lindsay R."/>
            <person name="Hauser H."/>
            <person name="James K.D."/>
            <person name="Quiles M."/>
            <person name="Madan Babu M."/>
            <person name="Saito T."/>
            <person name="Buchrieser C."/>
            <person name="Wardroper A."/>
            <person name="Felder M."/>
            <person name="Thangavelu M."/>
            <person name="Johnson D."/>
            <person name="Knights A."/>
            <person name="Loulseged H."/>
            <person name="Mungall K.L."/>
            <person name="Oliver K."/>
            <person name="Price C."/>
            <person name="Quail M.A."/>
            <person name="Urushihara H."/>
            <person name="Hernandez J."/>
            <person name="Rabbinowitsch E."/>
            <person name="Steffen D."/>
            <person name="Sanders M."/>
            <person name="Ma J."/>
            <person name="Kohara Y."/>
            <person name="Sharp S."/>
            <person name="Simmonds M.N."/>
            <person name="Spiegler S."/>
            <person name="Tivey A."/>
            <person name="Sugano S."/>
            <person name="White B."/>
            <person name="Walker D."/>
            <person name="Woodward J.R."/>
            <person name="Winckler T."/>
            <person name="Tanaka Y."/>
            <person name="Shaulsky G."/>
            <person name="Schleicher M."/>
            <person name="Weinstock G.M."/>
            <person name="Rosenthal A."/>
            <person name="Cox E.C."/>
            <person name="Chisholm R.L."/>
            <person name="Gibbs R.A."/>
            <person name="Loomis W.F."/>
            <person name="Platzer M."/>
            <person name="Kay R.R."/>
            <person name="Williams J.G."/>
            <person name="Dear P.H."/>
            <person name="Noegel A.A."/>
            <person name="Barrell B.G."/>
            <person name="Kuspa A."/>
        </authorList>
    </citation>
    <scope>NUCLEOTIDE SEQUENCE [LARGE SCALE GENOMIC DNA]</scope>
    <source>
        <strain>AX4</strain>
    </source>
</reference>
<reference key="3">
    <citation type="journal article" date="2004" name="Nucleic Acids Res.">
        <title>Analyses of cDNAs from growth and slug stages of Dictyostelium discoideum.</title>
        <authorList>
            <person name="Urushihara H."/>
            <person name="Morio T."/>
            <person name="Saito T."/>
            <person name="Kohara Y."/>
            <person name="Koriki E."/>
            <person name="Ochiai H."/>
            <person name="Maeda M."/>
            <person name="Williams J.G."/>
            <person name="Takeuchi I."/>
            <person name="Tanaka Y."/>
        </authorList>
    </citation>
    <scope>NUCLEOTIDE SEQUENCE [LARGE SCALE MRNA]</scope>
    <source>
        <strain>AX4</strain>
    </source>
</reference>
<reference key="4">
    <citation type="journal article" date="2010" name="J. Cell Sci.">
        <title>cosA, a Dictyostelium protein similar to the C-terminal domain of STARS, regulates the actin cytoskeleton and motility.</title>
        <authorList>
            <person name="Pang T.L."/>
            <person name="Chen F.C."/>
            <person name="Weng Y.L."/>
            <person name="Liao H.C."/>
            <person name="Yi Y.H."/>
            <person name="Ho C.L."/>
            <person name="Lin C.H."/>
            <person name="Chen M.Y."/>
        </authorList>
    </citation>
    <scope>FUNCTION</scope>
    <scope>DEVELOPMENTAL STAGE</scope>
    <scope>DISRUPTION PHENOTYPE</scope>
</reference>
<gene>
    <name type="primary">cosA</name>
    <name type="ORF">DDB_G0272861</name>
</gene>
<feature type="chain" id="PRO_0000365543" description="Protein costars">
    <location>
        <begin position="1"/>
        <end position="82"/>
    </location>
</feature>
<sequence length="82" mass="9209">MDVDHEVKELVKFIKKLGTKGADGKYSVKYGVLFNDDDVANFFEALVGTLKAAKKRGIITFQGEILLQRVHDNVDVILLKDE</sequence>
<keyword id="KW-1185">Reference proteome</keyword>
<accession>Q558Y7</accession>
<comment type="function">
    <text evidence="1">Modulates actin dynamics and cell motility.</text>
</comment>
<comment type="developmental stage">
    <text evidence="1">Expression peaks at early stages of development at the time cells become highly chemotactic and aggregation competent.</text>
</comment>
<comment type="disruption phenotype">
    <text evidence="1">Cells form smooth plaques on bacterial lawns, produce abnormally small fruiting bodies and display reduced migration towards the cAMP source in chemotactic assays. Analysis of cell motion in cAMP gradients reveals decreased speed suggesting a defect in the cellular machinery for motility. Cells exhibit changes in the actin cytoskeleton, showing aberrant distribution of F-actin in fluorescence cell staining and an increased amount of cytoskeleton associated actin. There is also excessive pseudopod formation. Expressing cosA or it's human counterpart restores wild-type like cAMP chemotaxis response.</text>
</comment>
<comment type="similarity">
    <text evidence="2">Belongs to the costars family.</text>
</comment>
<organism>
    <name type="scientific">Dictyostelium discoideum</name>
    <name type="common">Social amoeba</name>
    <dbReference type="NCBI Taxonomy" id="44689"/>
    <lineage>
        <taxon>Eukaryota</taxon>
        <taxon>Amoebozoa</taxon>
        <taxon>Evosea</taxon>
        <taxon>Eumycetozoa</taxon>
        <taxon>Dictyostelia</taxon>
        <taxon>Dictyosteliales</taxon>
        <taxon>Dictyosteliaceae</taxon>
        <taxon>Dictyostelium</taxon>
    </lineage>
</organism>